<sequence>MNISTMNLDQELAEIRASSSDHTNYFYSSERREHMFDKVLTPSDVGKLNRLVIPKQHAENFFPLEDNQNGTVLDFQDKNGKMWRFRYSYWNSSQSYVMTKGWSRFVKEKKLFAGDTVSFYRGYIPDDNAQPERRRKIMFIDWRPRAEINFVHNINNHNFVFGSPTYPTARFYPVTPEYSMPYRSFPPFYQNQFQEREYLGYGYGRVVNGNGVRYYAGSPLDQHHQWNLGRSEPLVYDSVPVFPAGRVPPSAPPQPSTTKKLRLFGVDVEESSSSGDTRGEMGVAGYSSSSPVVIRDDDQSFWRSPRGEMASSSSAMQLSDDEEYKRKGKSLEL</sequence>
<dbReference type="EMBL" id="FJ873734">
    <property type="protein sequence ID" value="ACP18974.1"/>
    <property type="status" value="ALT_INIT"/>
    <property type="molecule type" value="mRNA"/>
</dbReference>
<dbReference type="EMBL" id="AF096370">
    <property type="protein sequence ID" value="AAC62776.1"/>
    <property type="status" value="ALT_INIT"/>
    <property type="molecule type" value="Genomic_DNA"/>
</dbReference>
<dbReference type="EMBL" id="AL161492">
    <property type="protein sequence ID" value="CAB77720.1"/>
    <property type="status" value="ALT_INIT"/>
    <property type="molecule type" value="Genomic_DNA"/>
</dbReference>
<dbReference type="EMBL" id="CP002687">
    <property type="protein sequence ID" value="AEE82033.1"/>
    <property type="molecule type" value="Genomic_DNA"/>
</dbReference>
<dbReference type="EMBL" id="BT029520">
    <property type="protein sequence ID" value="ABL66776.1"/>
    <property type="molecule type" value="mRNA"/>
</dbReference>
<dbReference type="EMBL" id="AB493670">
    <property type="protein sequence ID" value="BAH30508.1"/>
    <property type="molecule type" value="mRNA"/>
</dbReference>
<dbReference type="PIR" id="T01944">
    <property type="entry name" value="T01944"/>
</dbReference>
<dbReference type="RefSeq" id="NP_192059.4">
    <property type="nucleotide sequence ID" value="NM_116380.6"/>
</dbReference>
<dbReference type="SMR" id="O82595"/>
<dbReference type="BioGRID" id="12049">
    <property type="interactions" value="11"/>
</dbReference>
<dbReference type="FunCoup" id="O82595">
    <property type="interactions" value="83"/>
</dbReference>
<dbReference type="IntAct" id="O82595">
    <property type="interactions" value="9"/>
</dbReference>
<dbReference type="STRING" id="3702.O82595"/>
<dbReference type="GlyGen" id="O82595">
    <property type="glycosylation" value="2 sites, 1 O-linked glycan (2 sites)"/>
</dbReference>
<dbReference type="PaxDb" id="3702-AT4G01500.1"/>
<dbReference type="ProteomicsDB" id="251147"/>
<dbReference type="EnsemblPlants" id="AT4G01500.1">
    <property type="protein sequence ID" value="AT4G01500.1"/>
    <property type="gene ID" value="AT4G01500"/>
</dbReference>
<dbReference type="GeneID" id="826750"/>
<dbReference type="Gramene" id="AT4G01500.1">
    <property type="protein sequence ID" value="AT4G01500.1"/>
    <property type="gene ID" value="AT4G01500"/>
</dbReference>
<dbReference type="KEGG" id="ath:AT4G01500"/>
<dbReference type="Araport" id="AT4G01500"/>
<dbReference type="TAIR" id="AT4G01500">
    <property type="gene designation" value="NGA4"/>
</dbReference>
<dbReference type="eggNOG" id="ENOG502QSHQ">
    <property type="taxonomic scope" value="Eukaryota"/>
</dbReference>
<dbReference type="HOGENOM" id="CLU_038898_3_2_1"/>
<dbReference type="InParanoid" id="O82595"/>
<dbReference type="OMA" id="WNLGRSE"/>
<dbReference type="OrthoDB" id="1057743at2759"/>
<dbReference type="PRO" id="PR:O82595"/>
<dbReference type="Proteomes" id="UP000006548">
    <property type="component" value="Chromosome 4"/>
</dbReference>
<dbReference type="ExpressionAtlas" id="O82595">
    <property type="expression patterns" value="baseline and differential"/>
</dbReference>
<dbReference type="GO" id="GO:0005634">
    <property type="term" value="C:nucleus"/>
    <property type="evidence" value="ECO:0007669"/>
    <property type="project" value="UniProtKB-SubCell"/>
</dbReference>
<dbReference type="GO" id="GO:0003677">
    <property type="term" value="F:DNA binding"/>
    <property type="evidence" value="ECO:0007669"/>
    <property type="project" value="UniProtKB-KW"/>
</dbReference>
<dbReference type="GO" id="GO:0003700">
    <property type="term" value="F:DNA-binding transcription factor activity"/>
    <property type="evidence" value="ECO:0000250"/>
    <property type="project" value="TAIR"/>
</dbReference>
<dbReference type="GO" id="GO:0009908">
    <property type="term" value="P:flower development"/>
    <property type="evidence" value="ECO:0000315"/>
    <property type="project" value="TAIR"/>
</dbReference>
<dbReference type="GO" id="GO:0048366">
    <property type="term" value="P:leaf development"/>
    <property type="evidence" value="ECO:0000315"/>
    <property type="project" value="TAIR"/>
</dbReference>
<dbReference type="GO" id="GO:1901371">
    <property type="term" value="P:regulation of leaf morphogenesis"/>
    <property type="evidence" value="ECO:0000316"/>
    <property type="project" value="TAIR"/>
</dbReference>
<dbReference type="CDD" id="cd10017">
    <property type="entry name" value="B3_DNA"/>
    <property type="match status" value="1"/>
</dbReference>
<dbReference type="Gene3D" id="2.40.330.10">
    <property type="entry name" value="DNA-binding pseudobarrel domain"/>
    <property type="match status" value="1"/>
</dbReference>
<dbReference type="InterPro" id="IPR003340">
    <property type="entry name" value="B3_DNA-bd"/>
</dbReference>
<dbReference type="InterPro" id="IPR015300">
    <property type="entry name" value="DNA-bd_pseudobarrel_sf"/>
</dbReference>
<dbReference type="InterPro" id="IPR044800">
    <property type="entry name" value="LEC2-like"/>
</dbReference>
<dbReference type="PANTHER" id="PTHR31140">
    <property type="entry name" value="B3 DOMAIN-CONTAINING TRANSCRIPTION FACTOR ABI3"/>
    <property type="match status" value="1"/>
</dbReference>
<dbReference type="PANTHER" id="PTHR31140:SF64">
    <property type="entry name" value="B3 DOMAIN-CONTAINING TRANSCRIPTION FACTOR NGA4"/>
    <property type="match status" value="1"/>
</dbReference>
<dbReference type="Pfam" id="PF02362">
    <property type="entry name" value="B3"/>
    <property type="match status" value="1"/>
</dbReference>
<dbReference type="SMART" id="SM01019">
    <property type="entry name" value="B3"/>
    <property type="match status" value="1"/>
</dbReference>
<dbReference type="SUPFAM" id="SSF101936">
    <property type="entry name" value="DNA-binding pseudobarrel domain"/>
    <property type="match status" value="1"/>
</dbReference>
<dbReference type="PROSITE" id="PS50863">
    <property type="entry name" value="B3"/>
    <property type="match status" value="1"/>
</dbReference>
<gene>
    <name type="primary">NGA4</name>
    <name type="ordered locus">At4g01500</name>
    <name type="ORF">F11O4.9</name>
</gene>
<organism>
    <name type="scientific">Arabidopsis thaliana</name>
    <name type="common">Mouse-ear cress</name>
    <dbReference type="NCBI Taxonomy" id="3702"/>
    <lineage>
        <taxon>Eukaryota</taxon>
        <taxon>Viridiplantae</taxon>
        <taxon>Streptophyta</taxon>
        <taxon>Embryophyta</taxon>
        <taxon>Tracheophyta</taxon>
        <taxon>Spermatophyta</taxon>
        <taxon>Magnoliopsida</taxon>
        <taxon>eudicotyledons</taxon>
        <taxon>Gunneridae</taxon>
        <taxon>Pentapetalae</taxon>
        <taxon>rosids</taxon>
        <taxon>malvids</taxon>
        <taxon>Brassicales</taxon>
        <taxon>Brassicaceae</taxon>
        <taxon>Camelineae</taxon>
        <taxon>Arabidopsis</taxon>
    </lineage>
</organism>
<proteinExistence type="evidence at protein level"/>
<evidence type="ECO:0000255" key="1">
    <source>
        <dbReference type="PROSITE-ProRule" id="PRU00326"/>
    </source>
</evidence>
<evidence type="ECO:0000256" key="2">
    <source>
        <dbReference type="SAM" id="MobiDB-lite"/>
    </source>
</evidence>
<evidence type="ECO:0000269" key="3">
    <source>
    </source>
</evidence>
<evidence type="ECO:0000305" key="4"/>
<reference key="1">
    <citation type="submission" date="2009-03" db="EMBL/GenBank/DDBJ databases">
        <title>The NGATHA distal organ development genes are essential for style specification in Arabidopsis.</title>
        <authorList>
            <person name="Alvarez J.P."/>
            <person name="Goldshmidt A."/>
            <person name="Efroni I."/>
            <person name="Bowman J.L."/>
            <person name="Eshed Y."/>
        </authorList>
    </citation>
    <scope>NUCLEOTIDE SEQUENCE [MRNA]</scope>
    <source>
        <strain>cv. Landsberg erecta</strain>
    </source>
</reference>
<reference key="2">
    <citation type="journal article" date="1999" name="Nature">
        <title>Sequence and analysis of chromosome 4 of the plant Arabidopsis thaliana.</title>
        <authorList>
            <person name="Mayer K.F.X."/>
            <person name="Schueller C."/>
            <person name="Wambutt R."/>
            <person name="Murphy G."/>
            <person name="Volckaert G."/>
            <person name="Pohl T."/>
            <person name="Duesterhoeft A."/>
            <person name="Stiekema W."/>
            <person name="Entian K.-D."/>
            <person name="Terryn N."/>
            <person name="Harris B."/>
            <person name="Ansorge W."/>
            <person name="Brandt P."/>
            <person name="Grivell L.A."/>
            <person name="Rieger M."/>
            <person name="Weichselgartner M."/>
            <person name="de Simone V."/>
            <person name="Obermaier B."/>
            <person name="Mache R."/>
            <person name="Mueller M."/>
            <person name="Kreis M."/>
            <person name="Delseny M."/>
            <person name="Puigdomenech P."/>
            <person name="Watson M."/>
            <person name="Schmidtheini T."/>
            <person name="Reichert B."/>
            <person name="Portetelle D."/>
            <person name="Perez-Alonso M."/>
            <person name="Boutry M."/>
            <person name="Bancroft I."/>
            <person name="Vos P."/>
            <person name="Hoheisel J."/>
            <person name="Zimmermann W."/>
            <person name="Wedler H."/>
            <person name="Ridley P."/>
            <person name="Langham S.-A."/>
            <person name="McCullagh B."/>
            <person name="Bilham L."/>
            <person name="Robben J."/>
            <person name="van der Schueren J."/>
            <person name="Grymonprez B."/>
            <person name="Chuang Y.-J."/>
            <person name="Vandenbussche F."/>
            <person name="Braeken M."/>
            <person name="Weltjens I."/>
            <person name="Voet M."/>
            <person name="Bastiaens I."/>
            <person name="Aert R."/>
            <person name="Defoor E."/>
            <person name="Weitzenegger T."/>
            <person name="Bothe G."/>
            <person name="Ramsperger U."/>
            <person name="Hilbert H."/>
            <person name="Braun M."/>
            <person name="Holzer E."/>
            <person name="Brandt A."/>
            <person name="Peters S."/>
            <person name="van Staveren M."/>
            <person name="Dirkse W."/>
            <person name="Mooijman P."/>
            <person name="Klein Lankhorst R."/>
            <person name="Rose M."/>
            <person name="Hauf J."/>
            <person name="Koetter P."/>
            <person name="Berneiser S."/>
            <person name="Hempel S."/>
            <person name="Feldpausch M."/>
            <person name="Lamberth S."/>
            <person name="Van den Daele H."/>
            <person name="De Keyser A."/>
            <person name="Buysshaert C."/>
            <person name="Gielen J."/>
            <person name="Villarroel R."/>
            <person name="De Clercq R."/>
            <person name="van Montagu M."/>
            <person name="Rogers J."/>
            <person name="Cronin A."/>
            <person name="Quail M.A."/>
            <person name="Bray-Allen S."/>
            <person name="Clark L."/>
            <person name="Doggett J."/>
            <person name="Hall S."/>
            <person name="Kay M."/>
            <person name="Lennard N."/>
            <person name="McLay K."/>
            <person name="Mayes R."/>
            <person name="Pettett A."/>
            <person name="Rajandream M.A."/>
            <person name="Lyne M."/>
            <person name="Benes V."/>
            <person name="Rechmann S."/>
            <person name="Borkova D."/>
            <person name="Bloecker H."/>
            <person name="Scharfe M."/>
            <person name="Grimm M."/>
            <person name="Loehnert T.-H."/>
            <person name="Dose S."/>
            <person name="de Haan M."/>
            <person name="Maarse A.C."/>
            <person name="Schaefer M."/>
            <person name="Mueller-Auer S."/>
            <person name="Gabel C."/>
            <person name="Fuchs M."/>
            <person name="Fartmann B."/>
            <person name="Granderath K."/>
            <person name="Dauner D."/>
            <person name="Herzl A."/>
            <person name="Neumann S."/>
            <person name="Argiriou A."/>
            <person name="Vitale D."/>
            <person name="Liguori R."/>
            <person name="Piravandi E."/>
            <person name="Massenet O."/>
            <person name="Quigley F."/>
            <person name="Clabauld G."/>
            <person name="Muendlein A."/>
            <person name="Felber R."/>
            <person name="Schnabl S."/>
            <person name="Hiller R."/>
            <person name="Schmidt W."/>
            <person name="Lecharny A."/>
            <person name="Aubourg S."/>
            <person name="Chefdor F."/>
            <person name="Cooke R."/>
            <person name="Berger C."/>
            <person name="Monfort A."/>
            <person name="Casacuberta E."/>
            <person name="Gibbons T."/>
            <person name="Weber N."/>
            <person name="Vandenbol M."/>
            <person name="Bargues M."/>
            <person name="Terol J."/>
            <person name="Torres A."/>
            <person name="Perez-Perez A."/>
            <person name="Purnelle B."/>
            <person name="Bent E."/>
            <person name="Johnson S."/>
            <person name="Tacon D."/>
            <person name="Jesse T."/>
            <person name="Heijnen L."/>
            <person name="Schwarz S."/>
            <person name="Scholler P."/>
            <person name="Heber S."/>
            <person name="Francs P."/>
            <person name="Bielke C."/>
            <person name="Frishman D."/>
            <person name="Haase D."/>
            <person name="Lemcke K."/>
            <person name="Mewes H.-W."/>
            <person name="Stocker S."/>
            <person name="Zaccaria P."/>
            <person name="Bevan M."/>
            <person name="Wilson R.K."/>
            <person name="de la Bastide M."/>
            <person name="Habermann K."/>
            <person name="Parnell L."/>
            <person name="Dedhia N."/>
            <person name="Gnoj L."/>
            <person name="Schutz K."/>
            <person name="Huang E."/>
            <person name="Spiegel L."/>
            <person name="Sekhon M."/>
            <person name="Murray J."/>
            <person name="Sheet P."/>
            <person name="Cordes M."/>
            <person name="Abu-Threideh J."/>
            <person name="Stoneking T."/>
            <person name="Kalicki J."/>
            <person name="Graves T."/>
            <person name="Harmon G."/>
            <person name="Edwards J."/>
            <person name="Latreille P."/>
            <person name="Courtney L."/>
            <person name="Cloud J."/>
            <person name="Abbott A."/>
            <person name="Scott K."/>
            <person name="Johnson D."/>
            <person name="Minx P."/>
            <person name="Bentley D."/>
            <person name="Fulton B."/>
            <person name="Miller N."/>
            <person name="Greco T."/>
            <person name="Kemp K."/>
            <person name="Kramer J."/>
            <person name="Fulton L."/>
            <person name="Mardis E."/>
            <person name="Dante M."/>
            <person name="Pepin K."/>
            <person name="Hillier L.W."/>
            <person name="Nelson J."/>
            <person name="Spieth J."/>
            <person name="Ryan E."/>
            <person name="Andrews S."/>
            <person name="Geisel C."/>
            <person name="Layman D."/>
            <person name="Du H."/>
            <person name="Ali J."/>
            <person name="Berghoff A."/>
            <person name="Jones K."/>
            <person name="Drone K."/>
            <person name="Cotton M."/>
            <person name="Joshu C."/>
            <person name="Antonoiu B."/>
            <person name="Zidanic M."/>
            <person name="Strong C."/>
            <person name="Sun H."/>
            <person name="Lamar B."/>
            <person name="Yordan C."/>
            <person name="Ma P."/>
            <person name="Zhong J."/>
            <person name="Preston R."/>
            <person name="Vil D."/>
            <person name="Shekher M."/>
            <person name="Matero A."/>
            <person name="Shah R."/>
            <person name="Swaby I.K."/>
            <person name="O'Shaughnessy A."/>
            <person name="Rodriguez M."/>
            <person name="Hoffman J."/>
            <person name="Till S."/>
            <person name="Granat S."/>
            <person name="Shohdy N."/>
            <person name="Hasegawa A."/>
            <person name="Hameed A."/>
            <person name="Lodhi M."/>
            <person name="Johnson A."/>
            <person name="Chen E."/>
            <person name="Marra M.A."/>
            <person name="Martienssen R."/>
            <person name="McCombie W.R."/>
        </authorList>
    </citation>
    <scope>NUCLEOTIDE SEQUENCE [LARGE SCALE GENOMIC DNA]</scope>
    <source>
        <strain>cv. Columbia</strain>
    </source>
</reference>
<reference key="3">
    <citation type="journal article" date="2017" name="Plant J.">
        <title>Araport11: a complete reannotation of the Arabidopsis thaliana reference genome.</title>
        <authorList>
            <person name="Cheng C.Y."/>
            <person name="Krishnakumar V."/>
            <person name="Chan A.P."/>
            <person name="Thibaud-Nissen F."/>
            <person name="Schobel S."/>
            <person name="Town C.D."/>
        </authorList>
    </citation>
    <scope>GENOME REANNOTATION</scope>
    <source>
        <strain>cv. Columbia</strain>
    </source>
</reference>
<reference key="4">
    <citation type="submission" date="2006-12" db="EMBL/GenBank/DDBJ databases">
        <title>Arabidopsis ORF clones.</title>
        <authorList>
            <person name="Bautista V.R."/>
            <person name="Kim C.J."/>
            <person name="Chen H."/>
            <person name="Quinitio C."/>
            <person name="Ecker J.R."/>
        </authorList>
    </citation>
    <scope>NUCLEOTIDE SEQUENCE [LARGE SCALE MRNA] OF 6-333</scope>
    <source>
        <strain>cv. Columbia</strain>
    </source>
</reference>
<reference key="5">
    <citation type="submission" date="2009-03" db="EMBL/GenBank/DDBJ databases">
        <title>ORF cloning and analysis of Arabidopsis transcription factor genes.</title>
        <authorList>
            <person name="Fujita M."/>
            <person name="Mizukado S."/>
            <person name="Seki M."/>
            <person name="Shinozaki K."/>
            <person name="Mitsuda N."/>
            <person name="Takiguchi Y."/>
            <person name="Takagi M."/>
        </authorList>
    </citation>
    <scope>NUCLEOTIDE SEQUENCE [LARGE SCALE MRNA] OF 6-333</scope>
</reference>
<reference key="6">
    <citation type="journal article" date="2006" name="Plant Cell">
        <title>Endogenous and synthetic microRNAs stimulate simultaneous, efficient, and localized regulation of multiple targets in diverse species.</title>
        <authorList>
            <person name="Alvarez J.P."/>
            <person name="Pekker I."/>
            <person name="Goldshmidt A."/>
            <person name="Blum E."/>
            <person name="Amsellem Z."/>
            <person name="Eshed Y."/>
        </authorList>
    </citation>
    <scope>FUNCTION</scope>
</reference>
<reference key="7">
    <citation type="journal article" date="2008" name="Trends Plant Sci.">
        <title>The plant B3 superfamily.</title>
        <authorList>
            <person name="Swaminathan K."/>
            <person name="Peterson K."/>
            <person name="Jack T."/>
        </authorList>
    </citation>
    <scope>GENE FAMILY</scope>
</reference>
<keyword id="KW-0238">DNA-binding</keyword>
<keyword id="KW-0539">Nucleus</keyword>
<keyword id="KW-1185">Reference proteome</keyword>
<keyword id="KW-0804">Transcription</keyword>
<keyword id="KW-0805">Transcription regulation</keyword>
<accession>O82595</accession>
<accession>C3VMM5</accession>
<protein>
    <recommendedName>
        <fullName>B3 domain-containing transcription factor NGA4</fullName>
    </recommendedName>
    <alternativeName>
        <fullName>Protein NGATHA 4</fullName>
    </alternativeName>
</protein>
<name>NGA4_ARATH</name>
<feature type="chain" id="PRO_0000375094" description="B3 domain-containing transcription factor NGA4">
    <location>
        <begin position="1"/>
        <end position="333"/>
    </location>
</feature>
<feature type="DNA-binding region" description="TF-B3" evidence="1">
    <location>
        <begin position="36"/>
        <end position="145"/>
    </location>
</feature>
<feature type="region of interest" description="Disordered" evidence="2">
    <location>
        <begin position="268"/>
        <end position="333"/>
    </location>
</feature>
<feature type="compositionally biased region" description="Basic and acidic residues" evidence="2">
    <location>
        <begin position="323"/>
        <end position="333"/>
    </location>
</feature>
<comment type="function">
    <text evidence="3">Regulates lateral organ growth. Functionally redundant with NGA1, NGA2 and NGA3.</text>
</comment>
<comment type="interaction">
    <interactant intactId="EBI-15193945">
        <id>O82595</id>
    </interactant>
    <interactant intactId="EBI-15191535">
        <id>O80748</id>
        <label>BBX26</label>
    </interactant>
    <organismsDiffer>false</organismsDiffer>
    <experiments>3</experiments>
</comment>
<comment type="interaction">
    <interactant intactId="EBI-15193945">
        <id>O82595</id>
    </interactant>
    <interactant intactId="EBI-4442165">
        <id>Q9SIV3</id>
        <label>GLK1</label>
    </interactant>
    <organismsDiffer>false</organismsDiffer>
    <experiments>3</experiments>
</comment>
<comment type="interaction">
    <interactant intactId="EBI-15193945">
        <id>O82595</id>
    </interactant>
    <interactant intactId="EBI-1115523">
        <id>Q9LDT3</id>
        <label>YAB4</label>
    </interactant>
    <organismsDiffer>false</organismsDiffer>
    <experiments>3</experiments>
</comment>
<comment type="subcellular location">
    <subcellularLocation>
        <location evidence="4">Nucleus</location>
    </subcellularLocation>
</comment>
<comment type="sequence caution" evidence="4">
    <conflict type="erroneous initiation">
        <sequence resource="EMBL-CDS" id="AAC62776"/>
    </conflict>
    <text>Truncated N-terminus.</text>
</comment>
<comment type="sequence caution" evidence="4">
    <conflict type="erroneous initiation">
        <sequence resource="EMBL-CDS" id="ACP18974"/>
    </conflict>
    <text>Truncated N-terminus.</text>
</comment>
<comment type="sequence caution" evidence="4">
    <conflict type="erroneous initiation">
        <sequence resource="EMBL-CDS" id="CAB77720"/>
    </conflict>
    <text>Truncated N-terminus.</text>
</comment>